<protein>
    <recommendedName>
        <fullName evidence="1">Chaperone protein DnaK</fullName>
    </recommendedName>
    <alternativeName>
        <fullName evidence="1">HSP70</fullName>
    </alternativeName>
    <alternativeName>
        <fullName evidence="1">Heat shock 70 kDa protein</fullName>
    </alternativeName>
    <alternativeName>
        <fullName evidence="1">Heat shock protein 70</fullName>
    </alternativeName>
</protein>
<dbReference type="EMBL" id="CP000232">
    <property type="protein sequence ID" value="ABC18915.1"/>
    <property type="molecule type" value="Genomic_DNA"/>
</dbReference>
<dbReference type="RefSeq" id="YP_429458.1">
    <property type="nucleotide sequence ID" value="NC_007644.1"/>
</dbReference>
<dbReference type="SMR" id="Q2RKX4"/>
<dbReference type="STRING" id="264732.Moth_0585"/>
<dbReference type="EnsemblBacteria" id="ABC18915">
    <property type="protein sequence ID" value="ABC18915"/>
    <property type="gene ID" value="Moth_0585"/>
</dbReference>
<dbReference type="KEGG" id="mta:Moth_0585"/>
<dbReference type="PATRIC" id="fig|264732.11.peg.629"/>
<dbReference type="eggNOG" id="COG0443">
    <property type="taxonomic scope" value="Bacteria"/>
</dbReference>
<dbReference type="HOGENOM" id="CLU_005965_2_4_9"/>
<dbReference type="OrthoDB" id="9766019at2"/>
<dbReference type="GO" id="GO:0005524">
    <property type="term" value="F:ATP binding"/>
    <property type="evidence" value="ECO:0007669"/>
    <property type="project" value="UniProtKB-UniRule"/>
</dbReference>
<dbReference type="GO" id="GO:0140662">
    <property type="term" value="F:ATP-dependent protein folding chaperone"/>
    <property type="evidence" value="ECO:0007669"/>
    <property type="project" value="InterPro"/>
</dbReference>
<dbReference type="GO" id="GO:0051082">
    <property type="term" value="F:unfolded protein binding"/>
    <property type="evidence" value="ECO:0007669"/>
    <property type="project" value="InterPro"/>
</dbReference>
<dbReference type="CDD" id="cd10234">
    <property type="entry name" value="ASKHA_NBD_HSP70_DnaK-like"/>
    <property type="match status" value="1"/>
</dbReference>
<dbReference type="FunFam" id="2.60.34.10:FF:000014">
    <property type="entry name" value="Chaperone protein DnaK HSP70"/>
    <property type="match status" value="1"/>
</dbReference>
<dbReference type="FunFam" id="1.20.1270.10:FF:000001">
    <property type="entry name" value="Molecular chaperone DnaK"/>
    <property type="match status" value="1"/>
</dbReference>
<dbReference type="FunFam" id="3.30.420.40:FF:000071">
    <property type="entry name" value="Molecular chaperone DnaK"/>
    <property type="match status" value="1"/>
</dbReference>
<dbReference type="FunFam" id="3.90.640.10:FF:000003">
    <property type="entry name" value="Molecular chaperone DnaK"/>
    <property type="match status" value="1"/>
</dbReference>
<dbReference type="Gene3D" id="1.20.1270.10">
    <property type="match status" value="1"/>
</dbReference>
<dbReference type="Gene3D" id="3.30.420.40">
    <property type="match status" value="2"/>
</dbReference>
<dbReference type="Gene3D" id="3.90.640.10">
    <property type="entry name" value="Actin, Chain A, domain 4"/>
    <property type="match status" value="1"/>
</dbReference>
<dbReference type="Gene3D" id="2.60.34.10">
    <property type="entry name" value="Substrate Binding Domain Of DNAk, Chain A, domain 1"/>
    <property type="match status" value="1"/>
</dbReference>
<dbReference type="HAMAP" id="MF_00332">
    <property type="entry name" value="DnaK"/>
    <property type="match status" value="1"/>
</dbReference>
<dbReference type="InterPro" id="IPR043129">
    <property type="entry name" value="ATPase_NBD"/>
</dbReference>
<dbReference type="InterPro" id="IPR012725">
    <property type="entry name" value="Chaperone_DnaK"/>
</dbReference>
<dbReference type="InterPro" id="IPR018181">
    <property type="entry name" value="Heat_shock_70_CS"/>
</dbReference>
<dbReference type="InterPro" id="IPR029048">
    <property type="entry name" value="HSP70_C_sf"/>
</dbReference>
<dbReference type="InterPro" id="IPR029047">
    <property type="entry name" value="HSP70_peptide-bd_sf"/>
</dbReference>
<dbReference type="InterPro" id="IPR013126">
    <property type="entry name" value="Hsp_70_fam"/>
</dbReference>
<dbReference type="NCBIfam" id="NF001413">
    <property type="entry name" value="PRK00290.1"/>
    <property type="match status" value="1"/>
</dbReference>
<dbReference type="NCBIfam" id="TIGR02350">
    <property type="entry name" value="prok_dnaK"/>
    <property type="match status" value="1"/>
</dbReference>
<dbReference type="PANTHER" id="PTHR19375">
    <property type="entry name" value="HEAT SHOCK PROTEIN 70KDA"/>
    <property type="match status" value="1"/>
</dbReference>
<dbReference type="Pfam" id="PF00012">
    <property type="entry name" value="HSP70"/>
    <property type="match status" value="1"/>
</dbReference>
<dbReference type="PRINTS" id="PR00301">
    <property type="entry name" value="HEATSHOCK70"/>
</dbReference>
<dbReference type="SUPFAM" id="SSF53067">
    <property type="entry name" value="Actin-like ATPase domain"/>
    <property type="match status" value="2"/>
</dbReference>
<dbReference type="SUPFAM" id="SSF100934">
    <property type="entry name" value="Heat shock protein 70kD (HSP70), C-terminal subdomain"/>
    <property type="match status" value="1"/>
</dbReference>
<dbReference type="SUPFAM" id="SSF100920">
    <property type="entry name" value="Heat shock protein 70kD (HSP70), peptide-binding domain"/>
    <property type="match status" value="1"/>
</dbReference>
<dbReference type="PROSITE" id="PS00297">
    <property type="entry name" value="HSP70_1"/>
    <property type="match status" value="1"/>
</dbReference>
<dbReference type="PROSITE" id="PS00329">
    <property type="entry name" value="HSP70_2"/>
    <property type="match status" value="1"/>
</dbReference>
<dbReference type="PROSITE" id="PS01036">
    <property type="entry name" value="HSP70_3"/>
    <property type="match status" value="1"/>
</dbReference>
<proteinExistence type="inferred from homology"/>
<organism>
    <name type="scientific">Moorella thermoacetica (strain ATCC 39073 / JCM 9320)</name>
    <dbReference type="NCBI Taxonomy" id="264732"/>
    <lineage>
        <taxon>Bacteria</taxon>
        <taxon>Bacillati</taxon>
        <taxon>Bacillota</taxon>
        <taxon>Clostridia</taxon>
        <taxon>Moorellales</taxon>
        <taxon>Moorellaceae</taxon>
        <taxon>Moorella</taxon>
    </lineage>
</organism>
<comment type="function">
    <text evidence="1">Acts as a chaperone.</text>
</comment>
<comment type="induction">
    <text evidence="1">By stress conditions e.g. heat shock.</text>
</comment>
<comment type="similarity">
    <text evidence="1">Belongs to the heat shock protein 70 family.</text>
</comment>
<gene>
    <name evidence="1" type="primary">dnaK</name>
    <name type="ordered locus">Moth_0585</name>
</gene>
<evidence type="ECO:0000255" key="1">
    <source>
        <dbReference type="HAMAP-Rule" id="MF_00332"/>
    </source>
</evidence>
<evidence type="ECO:0000256" key="2">
    <source>
        <dbReference type="SAM" id="MobiDB-lite"/>
    </source>
</evidence>
<sequence>MSKVIGIDLGTTNSCVAVMEGGEAVVIPNAEGGRTTPSVVAFTKEGERIVGQVAKRQAITNPDRTVISIKRHMGTNYKVKIDNKEYTPQEISAMILQKLKADAEAYLGEKVTQAVITVPAYFTDSQRQATKDAGRIAGLEVLRIINEPTAASLAYGLDKGEDQTILVYDLGGGTFDVSILELGDGVFEVKATSGNNRLGGDDFDQRIMDYLVDICRREHGVDLTQDKMAMQRLKEAAEKAKIELSGMTSTNINLPFISATPNGPVHLDVNLTRAKFEELIADLVEKTVGPTRQALADAGLEPKDIDKVLLVGGSTRVPLVQETVRKILGQEPHKGINPDECVALGAAIQGGVLAGEVKDVLLLDVTPLSLGIETLGGVFTKLIERNTTIPTSKSQIFSTAADNQTTVEIHVLQGERAMAADNKTLGRFQLTGIPPAPRGVPQIEVKFDIDANGIVHVSAKDLGTGKQQAITITSSSGLSEEEIQRMVKEAEASAEADRRRKEEIETRNQADSLIYQAERTLKEFKDKADQNDVDRIEKAKKELQEVLDSKNNDKIKEKMEALSQALYTLTTKVYQQAGAQAGAQGQGAAGGQKQDGNVYDADYKVVDDDKKE</sequence>
<reference key="1">
    <citation type="journal article" date="2008" name="Environ. Microbiol.">
        <title>The complete genome sequence of Moorella thermoacetica (f. Clostridium thermoaceticum).</title>
        <authorList>
            <person name="Pierce E."/>
            <person name="Xie G."/>
            <person name="Barabote R.D."/>
            <person name="Saunders E."/>
            <person name="Han C.S."/>
            <person name="Detter J.C."/>
            <person name="Richardson P."/>
            <person name="Brettin T.S."/>
            <person name="Das A."/>
            <person name="Ljungdahl L.G."/>
            <person name="Ragsdale S.W."/>
        </authorList>
    </citation>
    <scope>NUCLEOTIDE SEQUENCE [LARGE SCALE GENOMIC DNA]</scope>
    <source>
        <strain>ATCC 39073 / JCM 9320</strain>
    </source>
</reference>
<feature type="chain" id="PRO_1000059604" description="Chaperone protein DnaK">
    <location>
        <begin position="1"/>
        <end position="612"/>
    </location>
</feature>
<feature type="region of interest" description="Disordered" evidence="2">
    <location>
        <begin position="578"/>
        <end position="612"/>
    </location>
</feature>
<feature type="compositionally biased region" description="Basic and acidic residues" evidence="2">
    <location>
        <begin position="601"/>
        <end position="612"/>
    </location>
</feature>
<feature type="modified residue" description="Phosphothreonine; by autocatalysis" evidence="1">
    <location>
        <position position="174"/>
    </location>
</feature>
<keyword id="KW-0067">ATP-binding</keyword>
<keyword id="KW-0143">Chaperone</keyword>
<keyword id="KW-0547">Nucleotide-binding</keyword>
<keyword id="KW-0597">Phosphoprotein</keyword>
<keyword id="KW-0346">Stress response</keyword>
<name>DNAK_MOOTA</name>
<accession>Q2RKX4</accession>